<evidence type="ECO:0000255" key="1">
    <source>
        <dbReference type="HAMAP-Rule" id="MF_00328"/>
    </source>
</evidence>
<keyword id="KW-0067">ATP-binding</keyword>
<keyword id="KW-0963">Cytoplasm</keyword>
<keyword id="KW-0418">Kinase</keyword>
<keyword id="KW-0547">Nucleotide-binding</keyword>
<keyword id="KW-1185">Reference proteome</keyword>
<keyword id="KW-0808">Transferase</keyword>
<accession>Q13V49</accession>
<feature type="chain" id="PRO_0000266299" description="Guanylate kinase">
    <location>
        <begin position="1"/>
        <end position="225"/>
    </location>
</feature>
<feature type="domain" description="Guanylate kinase-like" evidence="1">
    <location>
        <begin position="20"/>
        <end position="198"/>
    </location>
</feature>
<feature type="binding site" evidence="1">
    <location>
        <begin position="27"/>
        <end position="34"/>
    </location>
    <ligand>
        <name>ATP</name>
        <dbReference type="ChEBI" id="CHEBI:30616"/>
    </ligand>
</feature>
<reference key="1">
    <citation type="journal article" date="2006" name="Proc. Natl. Acad. Sci. U.S.A.">
        <title>Burkholderia xenovorans LB400 harbors a multi-replicon, 9.73-Mbp genome shaped for versatility.</title>
        <authorList>
            <person name="Chain P.S.G."/>
            <person name="Denef V.J."/>
            <person name="Konstantinidis K.T."/>
            <person name="Vergez L.M."/>
            <person name="Agullo L."/>
            <person name="Reyes V.L."/>
            <person name="Hauser L."/>
            <person name="Cordova M."/>
            <person name="Gomez L."/>
            <person name="Gonzalez M."/>
            <person name="Land M."/>
            <person name="Lao V."/>
            <person name="Larimer F."/>
            <person name="LiPuma J.J."/>
            <person name="Mahenthiralingam E."/>
            <person name="Malfatti S.A."/>
            <person name="Marx C.J."/>
            <person name="Parnell J.J."/>
            <person name="Ramette A."/>
            <person name="Richardson P."/>
            <person name="Seeger M."/>
            <person name="Smith D."/>
            <person name="Spilker T."/>
            <person name="Sul W.J."/>
            <person name="Tsoi T.V."/>
            <person name="Ulrich L.E."/>
            <person name="Zhulin I.B."/>
            <person name="Tiedje J.M."/>
        </authorList>
    </citation>
    <scope>NUCLEOTIDE SEQUENCE [LARGE SCALE GENOMIC DNA]</scope>
    <source>
        <strain>LB400</strain>
    </source>
</reference>
<protein>
    <recommendedName>
        <fullName evidence="1">Guanylate kinase</fullName>
        <ecNumber evidence="1">2.7.4.8</ecNumber>
    </recommendedName>
    <alternativeName>
        <fullName evidence="1">GMP kinase</fullName>
    </alternativeName>
</protein>
<name>KGUA_PARXL</name>
<comment type="function">
    <text evidence="1">Essential for recycling GMP and indirectly, cGMP.</text>
</comment>
<comment type="catalytic activity">
    <reaction evidence="1">
        <text>GMP + ATP = GDP + ADP</text>
        <dbReference type="Rhea" id="RHEA:20780"/>
        <dbReference type="ChEBI" id="CHEBI:30616"/>
        <dbReference type="ChEBI" id="CHEBI:58115"/>
        <dbReference type="ChEBI" id="CHEBI:58189"/>
        <dbReference type="ChEBI" id="CHEBI:456216"/>
        <dbReference type="EC" id="2.7.4.8"/>
    </reaction>
</comment>
<comment type="subcellular location">
    <subcellularLocation>
        <location evidence="1">Cytoplasm</location>
    </subcellularLocation>
</comment>
<comment type="similarity">
    <text evidence="1">Belongs to the guanylate kinase family.</text>
</comment>
<dbReference type="EC" id="2.7.4.8" evidence="1"/>
<dbReference type="EMBL" id="CP000270">
    <property type="protein sequence ID" value="ABE32040.1"/>
    <property type="molecule type" value="Genomic_DNA"/>
</dbReference>
<dbReference type="RefSeq" id="WP_011489547.1">
    <property type="nucleotide sequence ID" value="NC_007951.1"/>
</dbReference>
<dbReference type="SMR" id="Q13V49"/>
<dbReference type="STRING" id="266265.Bxe_A0905"/>
<dbReference type="KEGG" id="bxb:DR64_3067"/>
<dbReference type="KEGG" id="bxe:Bxe_A0905"/>
<dbReference type="PATRIC" id="fig|266265.5.peg.3678"/>
<dbReference type="eggNOG" id="COG0194">
    <property type="taxonomic scope" value="Bacteria"/>
</dbReference>
<dbReference type="OrthoDB" id="9808150at2"/>
<dbReference type="Proteomes" id="UP000001817">
    <property type="component" value="Chromosome 1"/>
</dbReference>
<dbReference type="GO" id="GO:0005829">
    <property type="term" value="C:cytosol"/>
    <property type="evidence" value="ECO:0007669"/>
    <property type="project" value="TreeGrafter"/>
</dbReference>
<dbReference type="GO" id="GO:0005524">
    <property type="term" value="F:ATP binding"/>
    <property type="evidence" value="ECO:0007669"/>
    <property type="project" value="UniProtKB-UniRule"/>
</dbReference>
<dbReference type="GO" id="GO:0004385">
    <property type="term" value="F:guanylate kinase activity"/>
    <property type="evidence" value="ECO:0007669"/>
    <property type="project" value="UniProtKB-UniRule"/>
</dbReference>
<dbReference type="CDD" id="cd00071">
    <property type="entry name" value="GMPK"/>
    <property type="match status" value="1"/>
</dbReference>
<dbReference type="FunFam" id="3.30.63.10:FF:000005">
    <property type="entry name" value="Guanylate kinase"/>
    <property type="match status" value="1"/>
</dbReference>
<dbReference type="Gene3D" id="3.30.63.10">
    <property type="entry name" value="Guanylate Kinase phosphate binding domain"/>
    <property type="match status" value="1"/>
</dbReference>
<dbReference type="Gene3D" id="3.40.50.300">
    <property type="entry name" value="P-loop containing nucleotide triphosphate hydrolases"/>
    <property type="match status" value="1"/>
</dbReference>
<dbReference type="HAMAP" id="MF_00328">
    <property type="entry name" value="Guanylate_kinase"/>
    <property type="match status" value="1"/>
</dbReference>
<dbReference type="InterPro" id="IPR008145">
    <property type="entry name" value="GK/Ca_channel_bsu"/>
</dbReference>
<dbReference type="InterPro" id="IPR008144">
    <property type="entry name" value="Guanylate_kin-like_dom"/>
</dbReference>
<dbReference type="InterPro" id="IPR017665">
    <property type="entry name" value="Guanylate_kinase"/>
</dbReference>
<dbReference type="InterPro" id="IPR020590">
    <property type="entry name" value="Guanylate_kinase_CS"/>
</dbReference>
<dbReference type="InterPro" id="IPR027417">
    <property type="entry name" value="P-loop_NTPase"/>
</dbReference>
<dbReference type="NCBIfam" id="TIGR03263">
    <property type="entry name" value="guanyl_kin"/>
    <property type="match status" value="1"/>
</dbReference>
<dbReference type="PANTHER" id="PTHR23117:SF13">
    <property type="entry name" value="GUANYLATE KINASE"/>
    <property type="match status" value="1"/>
</dbReference>
<dbReference type="PANTHER" id="PTHR23117">
    <property type="entry name" value="GUANYLATE KINASE-RELATED"/>
    <property type="match status" value="1"/>
</dbReference>
<dbReference type="Pfam" id="PF00625">
    <property type="entry name" value="Guanylate_kin"/>
    <property type="match status" value="1"/>
</dbReference>
<dbReference type="SMART" id="SM00072">
    <property type="entry name" value="GuKc"/>
    <property type="match status" value="1"/>
</dbReference>
<dbReference type="SUPFAM" id="SSF52540">
    <property type="entry name" value="P-loop containing nucleoside triphosphate hydrolases"/>
    <property type="match status" value="1"/>
</dbReference>
<dbReference type="PROSITE" id="PS00856">
    <property type="entry name" value="GUANYLATE_KINASE_1"/>
    <property type="match status" value="1"/>
</dbReference>
<dbReference type="PROSITE" id="PS50052">
    <property type="entry name" value="GUANYLATE_KINASE_2"/>
    <property type="match status" value="1"/>
</dbReference>
<organism>
    <name type="scientific">Paraburkholderia xenovorans (strain LB400)</name>
    <dbReference type="NCBI Taxonomy" id="266265"/>
    <lineage>
        <taxon>Bacteria</taxon>
        <taxon>Pseudomonadati</taxon>
        <taxon>Pseudomonadota</taxon>
        <taxon>Betaproteobacteria</taxon>
        <taxon>Burkholderiales</taxon>
        <taxon>Burkholderiaceae</taxon>
        <taxon>Paraburkholderia</taxon>
    </lineage>
</organism>
<proteinExistence type="inferred from homology"/>
<gene>
    <name evidence="1" type="primary">gmk</name>
    <name type="ordered locus">Bxeno_A3502</name>
    <name type="ORF">Bxe_A0905</name>
</gene>
<sequence>MTDHHTRETPRNPYAGAYPGNLFMVVAPSGAGKSTLVNALLAGDDAIRLSISYTTRPPRPKELDGEHYHFTTVDDFMKRHDAGEFLESAEVHGNYYGTSRVWIEDQMKSGHDVLLEIDWQGAQQVKKQFHNAVEIFILPPSLEALEERLKKRGQDEPNVITRRLLAAGSEMAHAAEAEYVVINENFDRALSELQCLVAATRSRFASQYARHTQLFVQLGIHLPHA</sequence>